<accession>Q32ER0</accession>
<proteinExistence type="inferred from homology"/>
<protein>
    <recommendedName>
        <fullName>Putative pyrimidine-specific ribonucleoside hydrolase RihB</fullName>
        <ecNumber>3.2.2.8</ecNumber>
    </recommendedName>
    <alternativeName>
        <fullName>Cytidine/uridine-specific hydrolase</fullName>
    </alternativeName>
</protein>
<evidence type="ECO:0000250" key="1"/>
<evidence type="ECO:0000305" key="2"/>
<dbReference type="EC" id="3.2.2.8"/>
<dbReference type="EMBL" id="CP000034">
    <property type="protein sequence ID" value="ABB62195.1"/>
    <property type="molecule type" value="Genomic_DNA"/>
</dbReference>
<dbReference type="RefSeq" id="YP_403686.1">
    <property type="nucleotide sequence ID" value="NC_007606.1"/>
</dbReference>
<dbReference type="SMR" id="Q32ER0"/>
<dbReference type="STRING" id="300267.SDY_2104"/>
<dbReference type="EnsemblBacteria" id="ABB62195">
    <property type="protein sequence ID" value="ABB62195"/>
    <property type="gene ID" value="SDY_2104"/>
</dbReference>
<dbReference type="KEGG" id="sdy:SDY_2104"/>
<dbReference type="PATRIC" id="fig|300267.13.peg.2534"/>
<dbReference type="HOGENOM" id="CLU_036838_2_0_6"/>
<dbReference type="Proteomes" id="UP000002716">
    <property type="component" value="Chromosome"/>
</dbReference>
<dbReference type="GO" id="GO:0005829">
    <property type="term" value="C:cytosol"/>
    <property type="evidence" value="ECO:0007669"/>
    <property type="project" value="TreeGrafter"/>
</dbReference>
<dbReference type="GO" id="GO:0008477">
    <property type="term" value="F:purine nucleosidase activity"/>
    <property type="evidence" value="ECO:0007669"/>
    <property type="project" value="TreeGrafter"/>
</dbReference>
<dbReference type="GO" id="GO:0050263">
    <property type="term" value="F:ribosylpyrimidine nucleosidase activity"/>
    <property type="evidence" value="ECO:0007669"/>
    <property type="project" value="UniProtKB-EC"/>
</dbReference>
<dbReference type="GO" id="GO:0006152">
    <property type="term" value="P:purine nucleoside catabolic process"/>
    <property type="evidence" value="ECO:0007669"/>
    <property type="project" value="TreeGrafter"/>
</dbReference>
<dbReference type="CDD" id="cd02651">
    <property type="entry name" value="nuc_hydro_IU_UC_XIUA"/>
    <property type="match status" value="1"/>
</dbReference>
<dbReference type="Gene3D" id="3.90.245.10">
    <property type="entry name" value="Ribonucleoside hydrolase-like"/>
    <property type="match status" value="1"/>
</dbReference>
<dbReference type="InterPro" id="IPR001910">
    <property type="entry name" value="Inosine/uridine_hydrolase_dom"/>
</dbReference>
<dbReference type="InterPro" id="IPR023186">
    <property type="entry name" value="IUNH"/>
</dbReference>
<dbReference type="InterPro" id="IPR036452">
    <property type="entry name" value="Ribo_hydro-like"/>
</dbReference>
<dbReference type="NCBIfam" id="NF007417">
    <property type="entry name" value="PRK09955.1"/>
    <property type="match status" value="1"/>
</dbReference>
<dbReference type="PANTHER" id="PTHR12304">
    <property type="entry name" value="INOSINE-URIDINE PREFERRING NUCLEOSIDE HYDROLASE"/>
    <property type="match status" value="1"/>
</dbReference>
<dbReference type="PANTHER" id="PTHR12304:SF4">
    <property type="entry name" value="URIDINE NUCLEOSIDASE"/>
    <property type="match status" value="1"/>
</dbReference>
<dbReference type="Pfam" id="PF01156">
    <property type="entry name" value="IU_nuc_hydro"/>
    <property type="match status" value="1"/>
</dbReference>
<dbReference type="SUPFAM" id="SSF53590">
    <property type="entry name" value="Nucleoside hydrolase"/>
    <property type="match status" value="1"/>
</dbReference>
<name>RIHB_SHIDS</name>
<sequence>MAALPINGLNVCQKLEINVPVYAGMPQPIMRQQIVADNIHGETGLDGPVFEPLTRQAESTHAVKYIIDTLMASDGDITLVPVGPLSNIAVAMRMQPAILPKIREIVLMGGAYGTGNFTPSAEFNIFADPEAARVVFTSGVPLVMMGLDLTNQTVCTPDVIARMERAGGPAGELFSDIMNFTLKTQFENYGLAGGPVHDATCIGYLINPDGIKTQDMYVEVDVNSGPCYGRTVCDELGVLGKPANTKVGITIDTDWFWGLVEECVRGYIKTH</sequence>
<organism>
    <name type="scientific">Shigella dysenteriae serotype 1 (strain Sd197)</name>
    <dbReference type="NCBI Taxonomy" id="300267"/>
    <lineage>
        <taxon>Bacteria</taxon>
        <taxon>Pseudomonadati</taxon>
        <taxon>Pseudomonadota</taxon>
        <taxon>Gammaproteobacteria</taxon>
        <taxon>Enterobacterales</taxon>
        <taxon>Enterobacteriaceae</taxon>
        <taxon>Shigella</taxon>
    </lineage>
</organism>
<reference key="1">
    <citation type="journal article" date="2005" name="Nucleic Acids Res.">
        <title>Genome dynamics and diversity of Shigella species, the etiologic agents of bacillary dysentery.</title>
        <authorList>
            <person name="Yang F."/>
            <person name="Yang J."/>
            <person name="Zhang X."/>
            <person name="Chen L."/>
            <person name="Jiang Y."/>
            <person name="Yan Y."/>
            <person name="Tang X."/>
            <person name="Wang J."/>
            <person name="Xiong Z."/>
            <person name="Dong J."/>
            <person name="Xue Y."/>
            <person name="Zhu Y."/>
            <person name="Xu X."/>
            <person name="Sun L."/>
            <person name="Chen S."/>
            <person name="Nie H."/>
            <person name="Peng J."/>
            <person name="Xu J."/>
            <person name="Wang Y."/>
            <person name="Yuan Z."/>
            <person name="Wen Y."/>
            <person name="Yao Z."/>
            <person name="Shen Y."/>
            <person name="Qiang B."/>
            <person name="Hou Y."/>
            <person name="Yu J."/>
            <person name="Jin Q."/>
        </authorList>
    </citation>
    <scope>NUCLEOTIDE SEQUENCE [LARGE SCALE GENOMIC DNA]</scope>
    <source>
        <strain>Sd197</strain>
    </source>
</reference>
<comment type="catalytic activity">
    <reaction>
        <text>a pyrimidine ribonucleoside + H2O = a pyrimidine nucleobase + D-ribose</text>
        <dbReference type="Rhea" id="RHEA:56816"/>
        <dbReference type="ChEBI" id="CHEBI:15377"/>
        <dbReference type="ChEBI" id="CHEBI:26432"/>
        <dbReference type="ChEBI" id="CHEBI:47013"/>
        <dbReference type="ChEBI" id="CHEBI:141014"/>
        <dbReference type="EC" id="3.2.2.8"/>
    </reaction>
</comment>
<comment type="similarity">
    <text evidence="2">Belongs to the IUNH family. RihB subfamily.</text>
</comment>
<comment type="caution">
    <text evidence="2">This sequence is 42 amino acid shorter than orthologs and therefore lacks two conserved residues involved in calcium binding and active site activity. The two other residues involved in calcium binding are present but it is not known if they still bind calcium.</text>
</comment>
<keyword id="KW-0326">Glycosidase</keyword>
<keyword id="KW-0378">Hydrolase</keyword>
<keyword id="KW-1185">Reference proteome</keyword>
<feature type="chain" id="PRO_0000206828" description="Putative pyrimidine-specific ribonucleoside hydrolase RihB">
    <location>
        <begin position="1"/>
        <end position="271"/>
    </location>
</feature>
<feature type="binding site" evidence="1">
    <location>
        <position position="185"/>
    </location>
    <ligand>
        <name>substrate</name>
    </ligand>
</feature>
<feature type="binding site" evidence="1">
    <location>
        <position position="197"/>
    </location>
    <ligand>
        <name>substrate</name>
    </ligand>
</feature>
<gene>
    <name type="primary">rihB</name>
    <name type="ordered locus">SDY_2104</name>
</gene>